<sequence length="345" mass="36354">MSQSTPLRTDVVVIGAGPVGLSAVFQCGMLKLRCHVVDALEAPGGQLTALYPEKPIYDVPGFPSIPAGELIDRLLEQVAPFTPEFHLSQQVIALEAVAGAEPAAWRLTTSRGVVLEAAAVIIAAGAGAFGPNRPPLDRLEAFEGTSVFYMVSKREAFRGRKVVIAGGGDSAVDWAISLSDVAERVHVVHRRPKFRCAPESAARLDQLAAEGKIDLVIPYQLKALGGTEGRLESVTVADLDGAERQLDADVLLPFFGLAANLGPIAEWGLGVERQTIPVTQATCRTARPGIYAVGDVASYPGKLKLILTGFAEASAAAHNAFHDCRPGEALHFEHSTTTGVPGIPA</sequence>
<evidence type="ECO:0000255" key="1">
    <source>
        <dbReference type="HAMAP-Rule" id="MF_01685"/>
    </source>
</evidence>
<name>FENR_RHORT</name>
<reference key="1">
    <citation type="journal article" date="2011" name="Stand. Genomic Sci.">
        <title>Complete genome sequence of Rhodospirillum rubrum type strain (S1).</title>
        <authorList>
            <person name="Munk A.C."/>
            <person name="Copeland A."/>
            <person name="Lucas S."/>
            <person name="Lapidus A."/>
            <person name="Del Rio T.G."/>
            <person name="Barry K."/>
            <person name="Detter J.C."/>
            <person name="Hammon N."/>
            <person name="Israni S."/>
            <person name="Pitluck S."/>
            <person name="Brettin T."/>
            <person name="Bruce D."/>
            <person name="Han C."/>
            <person name="Tapia R."/>
            <person name="Gilna P."/>
            <person name="Schmutz J."/>
            <person name="Larimer F."/>
            <person name="Land M."/>
            <person name="Kyrpides N.C."/>
            <person name="Mavromatis K."/>
            <person name="Richardson P."/>
            <person name="Rohde M."/>
            <person name="Goeker M."/>
            <person name="Klenk H.P."/>
            <person name="Zhang Y."/>
            <person name="Roberts G.P."/>
            <person name="Reslewic S."/>
            <person name="Schwartz D.C."/>
        </authorList>
    </citation>
    <scope>NUCLEOTIDE SEQUENCE [LARGE SCALE GENOMIC DNA]</scope>
    <source>
        <strain>ATCC 11170 / ATH 1.1.1 / DSM 467 / LMG 4362 / NCIMB 8255 / S1</strain>
    </source>
</reference>
<organism>
    <name type="scientific">Rhodospirillum rubrum (strain ATCC 11170 / ATH 1.1.1 / DSM 467 / LMG 4362 / NCIMB 8255 / S1)</name>
    <dbReference type="NCBI Taxonomy" id="269796"/>
    <lineage>
        <taxon>Bacteria</taxon>
        <taxon>Pseudomonadati</taxon>
        <taxon>Pseudomonadota</taxon>
        <taxon>Alphaproteobacteria</taxon>
        <taxon>Rhodospirillales</taxon>
        <taxon>Rhodospirillaceae</taxon>
        <taxon>Rhodospirillum</taxon>
    </lineage>
</organism>
<protein>
    <recommendedName>
        <fullName evidence="1">Ferredoxin--NADP reductase</fullName>
        <shortName evidence="1">FNR</shortName>
        <shortName evidence="1">Fd-NADP(+) reductase</shortName>
        <ecNumber evidence="1">1.18.1.2</ecNumber>
    </recommendedName>
</protein>
<keyword id="KW-0274">FAD</keyword>
<keyword id="KW-0285">Flavoprotein</keyword>
<keyword id="KW-0521">NADP</keyword>
<keyword id="KW-0560">Oxidoreductase</keyword>
<keyword id="KW-1185">Reference proteome</keyword>
<dbReference type="EC" id="1.18.1.2" evidence="1"/>
<dbReference type="EMBL" id="CP000230">
    <property type="protein sequence ID" value="ABC24233.1"/>
    <property type="molecule type" value="Genomic_DNA"/>
</dbReference>
<dbReference type="RefSeq" id="WP_011391186.1">
    <property type="nucleotide sequence ID" value="NC_007643.1"/>
</dbReference>
<dbReference type="RefSeq" id="YP_428520.1">
    <property type="nucleotide sequence ID" value="NC_007643.1"/>
</dbReference>
<dbReference type="SMR" id="Q2RNR2"/>
<dbReference type="STRING" id="269796.Rru_A3439"/>
<dbReference type="EnsemblBacteria" id="ABC24233">
    <property type="protein sequence ID" value="ABC24233"/>
    <property type="gene ID" value="Rru_A3439"/>
</dbReference>
<dbReference type="KEGG" id="rru:Rru_A3439"/>
<dbReference type="PATRIC" id="fig|269796.9.peg.3555"/>
<dbReference type="eggNOG" id="COG0492">
    <property type="taxonomic scope" value="Bacteria"/>
</dbReference>
<dbReference type="HOGENOM" id="CLU_031864_5_5_5"/>
<dbReference type="PhylomeDB" id="Q2RNR2"/>
<dbReference type="Proteomes" id="UP000001929">
    <property type="component" value="Chromosome"/>
</dbReference>
<dbReference type="GO" id="GO:0004324">
    <property type="term" value="F:ferredoxin-NADP+ reductase activity"/>
    <property type="evidence" value="ECO:0007669"/>
    <property type="project" value="UniProtKB-UniRule"/>
</dbReference>
<dbReference type="GO" id="GO:0050660">
    <property type="term" value="F:flavin adenine dinucleotide binding"/>
    <property type="evidence" value="ECO:0007669"/>
    <property type="project" value="UniProtKB-UniRule"/>
</dbReference>
<dbReference type="GO" id="GO:0050661">
    <property type="term" value="F:NADP binding"/>
    <property type="evidence" value="ECO:0007669"/>
    <property type="project" value="UniProtKB-UniRule"/>
</dbReference>
<dbReference type="Gene3D" id="3.50.50.60">
    <property type="entry name" value="FAD/NAD(P)-binding domain"/>
    <property type="match status" value="3"/>
</dbReference>
<dbReference type="HAMAP" id="MF_01685">
    <property type="entry name" value="FENR2"/>
    <property type="match status" value="1"/>
</dbReference>
<dbReference type="InterPro" id="IPR036188">
    <property type="entry name" value="FAD/NAD-bd_sf"/>
</dbReference>
<dbReference type="InterPro" id="IPR023753">
    <property type="entry name" value="FAD/NAD-binding_dom"/>
</dbReference>
<dbReference type="InterPro" id="IPR022890">
    <property type="entry name" value="Fd--NADP_Rdtase_type_2"/>
</dbReference>
<dbReference type="InterPro" id="IPR050097">
    <property type="entry name" value="Ferredoxin-NADP_redctase_2"/>
</dbReference>
<dbReference type="PANTHER" id="PTHR48105">
    <property type="entry name" value="THIOREDOXIN REDUCTASE 1-RELATED-RELATED"/>
    <property type="match status" value="1"/>
</dbReference>
<dbReference type="Pfam" id="PF07992">
    <property type="entry name" value="Pyr_redox_2"/>
    <property type="match status" value="1"/>
</dbReference>
<dbReference type="PRINTS" id="PR00368">
    <property type="entry name" value="FADPNR"/>
</dbReference>
<dbReference type="PRINTS" id="PR00469">
    <property type="entry name" value="PNDRDTASEII"/>
</dbReference>
<dbReference type="SUPFAM" id="SSF51905">
    <property type="entry name" value="FAD/NAD(P)-binding domain"/>
    <property type="match status" value="1"/>
</dbReference>
<proteinExistence type="inferred from homology"/>
<feature type="chain" id="PRO_0000364919" description="Ferredoxin--NADP reductase">
    <location>
        <begin position="1"/>
        <end position="345"/>
    </location>
</feature>
<feature type="binding site" evidence="1">
    <location>
        <position position="38"/>
    </location>
    <ligand>
        <name>FAD</name>
        <dbReference type="ChEBI" id="CHEBI:57692"/>
    </ligand>
</feature>
<feature type="binding site" evidence="1">
    <location>
        <position position="46"/>
    </location>
    <ligand>
        <name>FAD</name>
        <dbReference type="ChEBI" id="CHEBI:57692"/>
    </ligand>
</feature>
<feature type="binding site" evidence="1">
    <location>
        <position position="51"/>
    </location>
    <ligand>
        <name>FAD</name>
        <dbReference type="ChEBI" id="CHEBI:57692"/>
    </ligand>
</feature>
<feature type="binding site" evidence="1">
    <location>
        <position position="91"/>
    </location>
    <ligand>
        <name>FAD</name>
        <dbReference type="ChEBI" id="CHEBI:57692"/>
    </ligand>
</feature>
<feature type="binding site" evidence="1">
    <location>
        <position position="129"/>
    </location>
    <ligand>
        <name>FAD</name>
        <dbReference type="ChEBI" id="CHEBI:57692"/>
    </ligand>
</feature>
<feature type="binding site" evidence="1">
    <location>
        <position position="295"/>
    </location>
    <ligand>
        <name>FAD</name>
        <dbReference type="ChEBI" id="CHEBI:57692"/>
    </ligand>
</feature>
<feature type="binding site" evidence="1">
    <location>
        <position position="336"/>
    </location>
    <ligand>
        <name>FAD</name>
        <dbReference type="ChEBI" id="CHEBI:57692"/>
    </ligand>
</feature>
<gene>
    <name type="ordered locus">Rru_A3439</name>
</gene>
<comment type="catalytic activity">
    <reaction evidence="1">
        <text>2 reduced [2Fe-2S]-[ferredoxin] + NADP(+) + H(+) = 2 oxidized [2Fe-2S]-[ferredoxin] + NADPH</text>
        <dbReference type="Rhea" id="RHEA:20125"/>
        <dbReference type="Rhea" id="RHEA-COMP:10000"/>
        <dbReference type="Rhea" id="RHEA-COMP:10001"/>
        <dbReference type="ChEBI" id="CHEBI:15378"/>
        <dbReference type="ChEBI" id="CHEBI:33737"/>
        <dbReference type="ChEBI" id="CHEBI:33738"/>
        <dbReference type="ChEBI" id="CHEBI:57783"/>
        <dbReference type="ChEBI" id="CHEBI:58349"/>
        <dbReference type="EC" id="1.18.1.2"/>
    </reaction>
</comment>
<comment type="cofactor">
    <cofactor evidence="1">
        <name>FAD</name>
        <dbReference type="ChEBI" id="CHEBI:57692"/>
    </cofactor>
    <text evidence="1">Binds 1 FAD per subunit.</text>
</comment>
<comment type="subunit">
    <text evidence="1">Homodimer.</text>
</comment>
<comment type="similarity">
    <text evidence="1">Belongs to the ferredoxin--NADP reductase type 2 family.</text>
</comment>
<accession>Q2RNR2</accession>